<comment type="function">
    <text evidence="1">Binds the 23S rRNA.</text>
</comment>
<comment type="cofactor">
    <cofactor evidence="1">
        <name>Zn(2+)</name>
        <dbReference type="ChEBI" id="CHEBI:29105"/>
    </cofactor>
    <text evidence="1">Binds 1 zinc ion per subunit.</text>
</comment>
<comment type="subunit">
    <text evidence="1">Part of the 50S ribosomal subunit.</text>
</comment>
<comment type="similarity">
    <text evidence="1">Belongs to the bacterial ribosomal protein bL31 family. Type A subfamily.</text>
</comment>
<reference key="1">
    <citation type="journal article" date="2009" name="PLoS Pathog.">
        <title>Molecular evolutionary consequences of niche restriction in Francisella tularensis, a facultative intracellular pathogen.</title>
        <authorList>
            <person name="Larsson P."/>
            <person name="Elfsmark D."/>
            <person name="Svensson K."/>
            <person name="Wikstroem P."/>
            <person name="Forsman M."/>
            <person name="Brettin T."/>
            <person name="Keim P."/>
            <person name="Johansson A."/>
        </authorList>
    </citation>
    <scope>NUCLEOTIDE SEQUENCE [LARGE SCALE GENOMIC DNA]</scope>
    <source>
        <strain>FSC147</strain>
    </source>
</reference>
<accession>B2SFJ3</accession>
<proteinExistence type="inferred from homology"/>
<feature type="chain" id="PRO_1000126632" description="Large ribosomal subunit protein bL31">
    <location>
        <begin position="1"/>
        <end position="71"/>
    </location>
</feature>
<feature type="binding site" evidence="1">
    <location>
        <position position="16"/>
    </location>
    <ligand>
        <name>Zn(2+)</name>
        <dbReference type="ChEBI" id="CHEBI:29105"/>
    </ligand>
</feature>
<feature type="binding site" evidence="1">
    <location>
        <position position="18"/>
    </location>
    <ligand>
        <name>Zn(2+)</name>
        <dbReference type="ChEBI" id="CHEBI:29105"/>
    </ligand>
</feature>
<feature type="binding site" evidence="1">
    <location>
        <position position="38"/>
    </location>
    <ligand>
        <name>Zn(2+)</name>
        <dbReference type="ChEBI" id="CHEBI:29105"/>
    </ligand>
</feature>
<feature type="binding site" evidence="1">
    <location>
        <position position="41"/>
    </location>
    <ligand>
        <name>Zn(2+)</name>
        <dbReference type="ChEBI" id="CHEBI:29105"/>
    </ligand>
</feature>
<evidence type="ECO:0000255" key="1">
    <source>
        <dbReference type="HAMAP-Rule" id="MF_00501"/>
    </source>
</evidence>
<evidence type="ECO:0000305" key="2"/>
<sequence length="71" mass="8104">MRQEIHPKYTEVTVTCSCGNTFVTRSTAGKKEMNIDICSECHPFYTGKQRIVDTAGRVDKFKKRFGGMKKI</sequence>
<dbReference type="EMBL" id="CP000915">
    <property type="protein sequence ID" value="ACD30346.1"/>
    <property type="molecule type" value="Genomic_DNA"/>
</dbReference>
<dbReference type="SMR" id="B2SFJ3"/>
<dbReference type="KEGG" id="ftm:FTM_0288"/>
<dbReference type="HOGENOM" id="CLU_114306_4_3_6"/>
<dbReference type="GO" id="GO:1990904">
    <property type="term" value="C:ribonucleoprotein complex"/>
    <property type="evidence" value="ECO:0007669"/>
    <property type="project" value="UniProtKB-KW"/>
</dbReference>
<dbReference type="GO" id="GO:0005840">
    <property type="term" value="C:ribosome"/>
    <property type="evidence" value="ECO:0007669"/>
    <property type="project" value="UniProtKB-KW"/>
</dbReference>
<dbReference type="GO" id="GO:0046872">
    <property type="term" value="F:metal ion binding"/>
    <property type="evidence" value="ECO:0007669"/>
    <property type="project" value="UniProtKB-KW"/>
</dbReference>
<dbReference type="GO" id="GO:0019843">
    <property type="term" value="F:rRNA binding"/>
    <property type="evidence" value="ECO:0007669"/>
    <property type="project" value="UniProtKB-KW"/>
</dbReference>
<dbReference type="GO" id="GO:0003735">
    <property type="term" value="F:structural constituent of ribosome"/>
    <property type="evidence" value="ECO:0007669"/>
    <property type="project" value="InterPro"/>
</dbReference>
<dbReference type="GO" id="GO:0006412">
    <property type="term" value="P:translation"/>
    <property type="evidence" value="ECO:0007669"/>
    <property type="project" value="UniProtKB-UniRule"/>
</dbReference>
<dbReference type="Gene3D" id="4.10.830.30">
    <property type="entry name" value="Ribosomal protein L31"/>
    <property type="match status" value="1"/>
</dbReference>
<dbReference type="HAMAP" id="MF_00501">
    <property type="entry name" value="Ribosomal_bL31_1"/>
    <property type="match status" value="1"/>
</dbReference>
<dbReference type="InterPro" id="IPR034704">
    <property type="entry name" value="Ribosomal_bL28/bL31-like_sf"/>
</dbReference>
<dbReference type="InterPro" id="IPR002150">
    <property type="entry name" value="Ribosomal_bL31"/>
</dbReference>
<dbReference type="InterPro" id="IPR027491">
    <property type="entry name" value="Ribosomal_bL31_A"/>
</dbReference>
<dbReference type="InterPro" id="IPR042105">
    <property type="entry name" value="Ribosomal_bL31_sf"/>
</dbReference>
<dbReference type="NCBIfam" id="TIGR00105">
    <property type="entry name" value="L31"/>
    <property type="match status" value="1"/>
</dbReference>
<dbReference type="NCBIfam" id="NF000612">
    <property type="entry name" value="PRK00019.1"/>
    <property type="match status" value="1"/>
</dbReference>
<dbReference type="NCBIfam" id="NF001809">
    <property type="entry name" value="PRK00528.1"/>
    <property type="match status" value="1"/>
</dbReference>
<dbReference type="PANTHER" id="PTHR33280">
    <property type="entry name" value="50S RIBOSOMAL PROTEIN L31, CHLOROPLASTIC"/>
    <property type="match status" value="1"/>
</dbReference>
<dbReference type="PANTHER" id="PTHR33280:SF6">
    <property type="entry name" value="LARGE RIBOSOMAL SUBUNIT PROTEIN BL31A"/>
    <property type="match status" value="1"/>
</dbReference>
<dbReference type="Pfam" id="PF01197">
    <property type="entry name" value="Ribosomal_L31"/>
    <property type="match status" value="1"/>
</dbReference>
<dbReference type="PRINTS" id="PR01249">
    <property type="entry name" value="RIBOSOMALL31"/>
</dbReference>
<dbReference type="SUPFAM" id="SSF143800">
    <property type="entry name" value="L28p-like"/>
    <property type="match status" value="1"/>
</dbReference>
<dbReference type="PROSITE" id="PS01143">
    <property type="entry name" value="RIBOSOMAL_L31"/>
    <property type="match status" value="1"/>
</dbReference>
<organism>
    <name type="scientific">Francisella tularensis subsp. mediasiatica (strain FSC147)</name>
    <dbReference type="NCBI Taxonomy" id="441952"/>
    <lineage>
        <taxon>Bacteria</taxon>
        <taxon>Pseudomonadati</taxon>
        <taxon>Pseudomonadota</taxon>
        <taxon>Gammaproteobacteria</taxon>
        <taxon>Thiotrichales</taxon>
        <taxon>Francisellaceae</taxon>
        <taxon>Francisella</taxon>
    </lineage>
</organism>
<gene>
    <name evidence="1" type="primary">rpmE</name>
    <name type="ordered locus">FTM_0288</name>
</gene>
<keyword id="KW-0479">Metal-binding</keyword>
<keyword id="KW-0687">Ribonucleoprotein</keyword>
<keyword id="KW-0689">Ribosomal protein</keyword>
<keyword id="KW-0694">RNA-binding</keyword>
<keyword id="KW-0699">rRNA-binding</keyword>
<keyword id="KW-0862">Zinc</keyword>
<protein>
    <recommendedName>
        <fullName evidence="1">Large ribosomal subunit protein bL31</fullName>
    </recommendedName>
    <alternativeName>
        <fullName evidence="2">50S ribosomal protein L31</fullName>
    </alternativeName>
</protein>
<name>RL31_FRATM</name>